<dbReference type="EC" id="2.1.1.100" evidence="6"/>
<dbReference type="EMBL" id="D87750">
    <property type="protein sequence ID" value="BAA19000.1"/>
    <property type="molecule type" value="mRNA"/>
</dbReference>
<dbReference type="RefSeq" id="NP_001081219.1">
    <property type="nucleotide sequence ID" value="NM_001087750.1"/>
</dbReference>
<dbReference type="SMR" id="O12947"/>
<dbReference type="GeneID" id="397717"/>
<dbReference type="KEGG" id="xla:397717"/>
<dbReference type="AGR" id="Xenbase:XB-GENE-6068654"/>
<dbReference type="CTD" id="397717"/>
<dbReference type="Xenbase" id="XB-GENE-6068654">
    <property type="gene designation" value="icmt.S"/>
</dbReference>
<dbReference type="OMA" id="IKREEAY"/>
<dbReference type="OrthoDB" id="422086at2759"/>
<dbReference type="Proteomes" id="UP000186698">
    <property type="component" value="Chromosome 7S"/>
</dbReference>
<dbReference type="Bgee" id="397717">
    <property type="expression patterns" value="Expressed in blastula and 19 other cell types or tissues"/>
</dbReference>
<dbReference type="GO" id="GO:0005783">
    <property type="term" value="C:endoplasmic reticulum"/>
    <property type="evidence" value="ECO:0000318"/>
    <property type="project" value="GO_Central"/>
</dbReference>
<dbReference type="GO" id="GO:0005789">
    <property type="term" value="C:endoplasmic reticulum membrane"/>
    <property type="evidence" value="ECO:0007669"/>
    <property type="project" value="UniProtKB-SubCell"/>
</dbReference>
<dbReference type="GO" id="GO:0004671">
    <property type="term" value="F:protein C-terminal S-isoprenylcysteine carboxyl O-methyltransferase activity"/>
    <property type="evidence" value="ECO:0000318"/>
    <property type="project" value="GO_Central"/>
</dbReference>
<dbReference type="GO" id="GO:0032259">
    <property type="term" value="P:methylation"/>
    <property type="evidence" value="ECO:0007669"/>
    <property type="project" value="UniProtKB-KW"/>
</dbReference>
<dbReference type="FunFam" id="1.20.120.1630:FF:000007">
    <property type="entry name" value="Protein-S-isoprenylcysteine O-methyltransferase"/>
    <property type="match status" value="1"/>
</dbReference>
<dbReference type="Gene3D" id="1.20.120.1630">
    <property type="match status" value="1"/>
</dbReference>
<dbReference type="InterPro" id="IPR007269">
    <property type="entry name" value="ICMT_MeTrfase"/>
</dbReference>
<dbReference type="InterPro" id="IPR025770">
    <property type="entry name" value="PPMT_MeTrfase"/>
</dbReference>
<dbReference type="PANTHER" id="PTHR12714">
    <property type="entry name" value="PROTEIN-S ISOPRENYLCYSTEINE O-METHYLTRANSFERASE"/>
    <property type="match status" value="1"/>
</dbReference>
<dbReference type="PANTHER" id="PTHR12714:SF9">
    <property type="entry name" value="PROTEIN-S-ISOPRENYLCYSTEINE O-METHYLTRANSFERASE"/>
    <property type="match status" value="1"/>
</dbReference>
<dbReference type="Pfam" id="PF04140">
    <property type="entry name" value="ICMT"/>
    <property type="match status" value="1"/>
</dbReference>
<dbReference type="PROSITE" id="PS51564">
    <property type="entry name" value="SAM_ICMT"/>
    <property type="match status" value="1"/>
</dbReference>
<organism>
    <name type="scientific">Xenopus laevis</name>
    <name type="common">African clawed frog</name>
    <dbReference type="NCBI Taxonomy" id="8355"/>
    <lineage>
        <taxon>Eukaryota</taxon>
        <taxon>Metazoa</taxon>
        <taxon>Chordata</taxon>
        <taxon>Craniata</taxon>
        <taxon>Vertebrata</taxon>
        <taxon>Euteleostomi</taxon>
        <taxon>Amphibia</taxon>
        <taxon>Batrachia</taxon>
        <taxon>Anura</taxon>
        <taxon>Pipoidea</taxon>
        <taxon>Pipidae</taxon>
        <taxon>Xenopodinae</taxon>
        <taxon>Xenopus</taxon>
        <taxon>Xenopus</taxon>
    </lineage>
</organism>
<feature type="chain" id="PRO_0000209897" description="Protein-S-isoprenylcysteine O-methyltransferase">
    <location>
        <begin position="1"/>
        <end position="288"/>
    </location>
</feature>
<feature type="transmembrane region" description="Helical" evidence="3">
    <location>
        <begin position="13"/>
        <end position="29"/>
    </location>
</feature>
<feature type="topological domain" description="Lumenal" evidence="3">
    <location>
        <begin position="30"/>
        <end position="45"/>
    </location>
</feature>
<feature type="transmembrane region" description="Helical" evidence="3">
    <location>
        <begin position="46"/>
        <end position="63"/>
    </location>
</feature>
<feature type="topological domain" description="Cytoplasmic" evidence="3">
    <location>
        <begin position="64"/>
        <end position="73"/>
    </location>
</feature>
<feature type="transmembrane region" description="Helical" evidence="3">
    <location>
        <begin position="74"/>
        <end position="91"/>
    </location>
</feature>
<feature type="topological domain" description="Lumenal" evidence="3">
    <location>
        <begin position="92"/>
        <end position="96"/>
    </location>
</feature>
<feature type="transmembrane region" description="Helical" evidence="3">
    <location>
        <begin position="97"/>
        <end position="116"/>
    </location>
</feature>
<feature type="topological domain" description="Cytoplasmic" evidence="3">
    <location>
        <begin position="117"/>
        <end position="135"/>
    </location>
</feature>
<feature type="transmembrane region" description="Helical" evidence="3">
    <location>
        <begin position="136"/>
        <end position="153"/>
    </location>
</feature>
<feature type="topological domain" description="Lumenal" evidence="3">
    <location>
        <begin position="154"/>
        <end position="158"/>
    </location>
</feature>
<feature type="transmembrane region" description="Helical" evidence="3">
    <location>
        <begin position="159"/>
        <end position="178"/>
    </location>
</feature>
<feature type="topological domain" description="Cytoplasmic" evidence="3">
    <location>
        <begin position="179"/>
        <end position="216"/>
    </location>
</feature>
<feature type="transmembrane region" description="Helical" evidence="3">
    <location>
        <begin position="217"/>
        <end position="232"/>
    </location>
</feature>
<feature type="topological domain" description="Lumenal" evidence="3">
    <location>
        <position position="233"/>
    </location>
</feature>
<feature type="transmembrane region" description="Helical" evidence="3">
    <location>
        <begin position="234"/>
        <end position="248"/>
    </location>
</feature>
<feature type="topological domain" description="Cytoplasmic" evidence="3">
    <location>
        <begin position="249"/>
        <end position="288"/>
    </location>
</feature>
<feature type="binding site" evidence="1">
    <location>
        <position position="194"/>
    </location>
    <ligand>
        <name>S-adenosyl-L-methionine</name>
        <dbReference type="ChEBI" id="CHEBI:59789"/>
    </ligand>
</feature>
<feature type="binding site" evidence="1">
    <location>
        <begin position="201"/>
        <end position="204"/>
    </location>
    <ligand>
        <name>S-adenosyl-L-methionine</name>
        <dbReference type="ChEBI" id="CHEBI:59789"/>
    </ligand>
</feature>
<feature type="binding site" evidence="1">
    <location>
        <position position="209"/>
    </location>
    <ligand>
        <name>S-adenosyl-L-methionine</name>
        <dbReference type="ChEBI" id="CHEBI:59789"/>
    </ligand>
</feature>
<feature type="binding site" evidence="1">
    <location>
        <begin position="214"/>
        <end position="217"/>
    </location>
    <ligand>
        <name>S-adenosyl-L-methionine</name>
        <dbReference type="ChEBI" id="CHEBI:59789"/>
    </ligand>
</feature>
<feature type="binding site" evidence="1">
    <location>
        <position position="251"/>
    </location>
    <ligand>
        <name>substrate</name>
    </ligand>
</feature>
<feature type="binding site" evidence="1">
    <location>
        <position position="255"/>
    </location>
    <ligand>
        <name>S-adenosyl-L-methionine</name>
        <dbReference type="ChEBI" id="CHEBI:59789"/>
    </ligand>
</feature>
<protein>
    <recommendedName>
        <fullName>Protein-S-isoprenylcysteine O-methyltransferase</fullName>
        <ecNumber evidence="6">2.1.1.100</ecNumber>
    </recommendedName>
    <alternativeName>
        <fullName>Farnesyl cysteine carboxyl methyltransferase</fullName>
        <shortName>FCMT</shortName>
    </alternativeName>
    <alternativeName>
        <fullName>Isoprenylcysteine carboxylmethyltransferase</fullName>
    </alternativeName>
    <alternativeName>
        <fullName>Prenylated protein carboxyl methyltransferase</fullName>
        <shortName>PPMT</shortName>
    </alternativeName>
    <alternativeName>
        <fullName>Prenylcysteine carboxyl methyltransferase</fullName>
        <shortName>pcCMT</shortName>
    </alternativeName>
</protein>
<name>ICMT_XENLA</name>
<gene>
    <name type="primary">icmt</name>
</gene>
<accession>O12947</accession>
<reference key="1">
    <citation type="journal article" date="1997" name="Mol. Cell. Biol.">
        <title>Genes encoding farnesyl cysteine carboxyl methyltransferase in Schizosaccharomyces pombe and Xenopus laevis.</title>
        <authorList>
            <person name="Imai Y."/>
            <person name="Davey J."/>
            <person name="Kawagishi-Kobayashi M."/>
            <person name="Yamamoto M."/>
        </authorList>
    </citation>
    <scope>NUCLEOTIDE SEQUENCE [MRNA]</scope>
    <scope>FUNCTION</scope>
    <scope>CATALYTIC ACTIVITY</scope>
    <source>
        <tissue>Ovary</tissue>
    </source>
</reference>
<comment type="function">
    <text evidence="5">Catalyzes the post-translational methylation of isoprenylated C-terminal cysteine residues.</text>
</comment>
<comment type="catalytic activity">
    <reaction evidence="6">
        <text>[protein]-C-terminal S-[(2E,6E)-farnesyl]-L-cysteine + S-adenosyl-L-methionine = [protein]-C-terminal S-[(2E,6E)-farnesyl]-L-cysteine methyl ester + S-adenosyl-L-homocysteine</text>
        <dbReference type="Rhea" id="RHEA:21672"/>
        <dbReference type="Rhea" id="RHEA-COMP:12125"/>
        <dbReference type="Rhea" id="RHEA-COMP:12126"/>
        <dbReference type="ChEBI" id="CHEBI:57856"/>
        <dbReference type="ChEBI" id="CHEBI:59789"/>
        <dbReference type="ChEBI" id="CHEBI:90510"/>
        <dbReference type="ChEBI" id="CHEBI:90511"/>
        <dbReference type="EC" id="2.1.1.100"/>
    </reaction>
</comment>
<comment type="subcellular location">
    <subcellularLocation>
        <location evidence="2">Endoplasmic reticulum membrane</location>
        <topology evidence="2">Multi-pass membrane protein</topology>
    </subcellularLocation>
</comment>
<comment type="similarity">
    <text evidence="4">Belongs to the class VI-like SAM-binding methyltransferase superfamily. Isoprenylcysteine carboxyl methyltransferase family.</text>
</comment>
<sequence>MAGARLLQEGRVSIVSFTLGASVISLPLLTSSFTEQTLLAAAPGRIALVFFIAALNGLLLLLYKAQLYQVAIRASFLGFAFGCGLLLSITQSPWKPFGWYVCSLSFFHYSEYLVTAMNNPRSLSIDSFLLNHSLEYTLAALSSWVEFTIETTIYPDLKQITWLSVIGLIMVLFGEVLRKCAMLTAGSNFNHIVQNEKSDSHTLVTSGVYSWFRHPSYVGWFYWSIGTQVLLCNPLCLVGYTLASWRFFSERIEEEEFSLIHFFGENYLEYKKKVPTGLPFIKGVKMEP</sequence>
<proteinExistence type="evidence at protein level"/>
<keyword id="KW-0256">Endoplasmic reticulum</keyword>
<keyword id="KW-0472">Membrane</keyword>
<keyword id="KW-0489">Methyltransferase</keyword>
<keyword id="KW-1185">Reference proteome</keyword>
<keyword id="KW-0949">S-adenosyl-L-methionine</keyword>
<keyword id="KW-0808">Transferase</keyword>
<keyword id="KW-0812">Transmembrane</keyword>
<keyword id="KW-1133">Transmembrane helix</keyword>
<evidence type="ECO:0000250" key="1">
    <source>
        <dbReference type="UniProtKB" id="D6WJ77"/>
    </source>
</evidence>
<evidence type="ECO:0000250" key="2">
    <source>
        <dbReference type="UniProtKB" id="O60725"/>
    </source>
</evidence>
<evidence type="ECO:0000255" key="3"/>
<evidence type="ECO:0000255" key="4">
    <source>
        <dbReference type="PROSITE-ProRule" id="PRU00897"/>
    </source>
</evidence>
<evidence type="ECO:0000269" key="5">
    <source>
    </source>
</evidence>
<evidence type="ECO:0000305" key="6">
    <source>
    </source>
</evidence>